<feature type="chain" id="PRO_1000203431" description="Phosphopantetheine adenylyltransferase">
    <location>
        <begin position="1"/>
        <end position="159"/>
    </location>
</feature>
<feature type="binding site" evidence="1">
    <location>
        <begin position="9"/>
        <end position="10"/>
    </location>
    <ligand>
        <name>ATP</name>
        <dbReference type="ChEBI" id="CHEBI:30616"/>
    </ligand>
</feature>
<feature type="binding site" evidence="1">
    <location>
        <position position="9"/>
    </location>
    <ligand>
        <name>substrate</name>
    </ligand>
</feature>
<feature type="binding site" evidence="1">
    <location>
        <position position="17"/>
    </location>
    <ligand>
        <name>ATP</name>
        <dbReference type="ChEBI" id="CHEBI:30616"/>
    </ligand>
</feature>
<feature type="binding site" evidence="1">
    <location>
        <position position="41"/>
    </location>
    <ligand>
        <name>substrate</name>
    </ligand>
</feature>
<feature type="binding site" evidence="1">
    <location>
        <position position="73"/>
    </location>
    <ligand>
        <name>substrate</name>
    </ligand>
</feature>
<feature type="binding site" evidence="1">
    <location>
        <position position="87"/>
    </location>
    <ligand>
        <name>substrate</name>
    </ligand>
</feature>
<feature type="binding site" evidence="1">
    <location>
        <begin position="88"/>
        <end position="90"/>
    </location>
    <ligand>
        <name>ATP</name>
        <dbReference type="ChEBI" id="CHEBI:30616"/>
    </ligand>
</feature>
<feature type="binding site" evidence="1">
    <location>
        <position position="98"/>
    </location>
    <ligand>
        <name>ATP</name>
        <dbReference type="ChEBI" id="CHEBI:30616"/>
    </ligand>
</feature>
<feature type="binding site" evidence="1">
    <location>
        <begin position="123"/>
        <end position="129"/>
    </location>
    <ligand>
        <name>ATP</name>
        <dbReference type="ChEBI" id="CHEBI:30616"/>
    </ligand>
</feature>
<feature type="site" description="Transition state stabilizer" evidence="1">
    <location>
        <position position="17"/>
    </location>
</feature>
<keyword id="KW-0067">ATP-binding</keyword>
<keyword id="KW-0173">Coenzyme A biosynthesis</keyword>
<keyword id="KW-0963">Cytoplasm</keyword>
<keyword id="KW-0460">Magnesium</keyword>
<keyword id="KW-0547">Nucleotide-binding</keyword>
<keyword id="KW-0548">Nucleotidyltransferase</keyword>
<keyword id="KW-0808">Transferase</keyword>
<comment type="function">
    <text evidence="1">Reversibly transfers an adenylyl group from ATP to 4'-phosphopantetheine, yielding dephospho-CoA (dPCoA) and pyrophosphate.</text>
</comment>
<comment type="catalytic activity">
    <reaction evidence="1">
        <text>(R)-4'-phosphopantetheine + ATP + H(+) = 3'-dephospho-CoA + diphosphate</text>
        <dbReference type="Rhea" id="RHEA:19801"/>
        <dbReference type="ChEBI" id="CHEBI:15378"/>
        <dbReference type="ChEBI" id="CHEBI:30616"/>
        <dbReference type="ChEBI" id="CHEBI:33019"/>
        <dbReference type="ChEBI" id="CHEBI:57328"/>
        <dbReference type="ChEBI" id="CHEBI:61723"/>
        <dbReference type="EC" id="2.7.7.3"/>
    </reaction>
</comment>
<comment type="cofactor">
    <cofactor evidence="1">
        <name>Mg(2+)</name>
        <dbReference type="ChEBI" id="CHEBI:18420"/>
    </cofactor>
</comment>
<comment type="pathway">
    <text evidence="1">Cofactor biosynthesis; coenzyme A biosynthesis; CoA from (R)-pantothenate: step 4/5.</text>
</comment>
<comment type="subunit">
    <text evidence="1">Homohexamer.</text>
</comment>
<comment type="subcellular location">
    <subcellularLocation>
        <location evidence="1">Cytoplasm</location>
    </subcellularLocation>
</comment>
<comment type="similarity">
    <text evidence="1">Belongs to the bacterial CoaD family.</text>
</comment>
<reference key="1">
    <citation type="journal article" date="2009" name="Genome Biol.">
        <title>Genomic and genetic analyses of diversity and plant interactions of Pseudomonas fluorescens.</title>
        <authorList>
            <person name="Silby M.W."/>
            <person name="Cerdeno-Tarraga A.M."/>
            <person name="Vernikos G.S."/>
            <person name="Giddens S.R."/>
            <person name="Jackson R.W."/>
            <person name="Preston G.M."/>
            <person name="Zhang X.-X."/>
            <person name="Moon C.D."/>
            <person name="Gehrig S.M."/>
            <person name="Godfrey S.A.C."/>
            <person name="Knight C.G."/>
            <person name="Malone J.G."/>
            <person name="Robinson Z."/>
            <person name="Spiers A.J."/>
            <person name="Harris S."/>
            <person name="Challis G.L."/>
            <person name="Yaxley A.M."/>
            <person name="Harris D."/>
            <person name="Seeger K."/>
            <person name="Murphy L."/>
            <person name="Rutter S."/>
            <person name="Squares R."/>
            <person name="Quail M.A."/>
            <person name="Saunders E."/>
            <person name="Mavromatis K."/>
            <person name="Brettin T.S."/>
            <person name="Bentley S.D."/>
            <person name="Hothersall J."/>
            <person name="Stephens E."/>
            <person name="Thomas C.M."/>
            <person name="Parkhill J."/>
            <person name="Levy S.B."/>
            <person name="Rainey P.B."/>
            <person name="Thomson N.R."/>
        </authorList>
    </citation>
    <scope>NUCLEOTIDE SEQUENCE [LARGE SCALE GENOMIC DNA]</scope>
    <source>
        <strain>SBW25</strain>
    </source>
</reference>
<organism>
    <name type="scientific">Pseudomonas fluorescens (strain SBW25)</name>
    <dbReference type="NCBI Taxonomy" id="216595"/>
    <lineage>
        <taxon>Bacteria</taxon>
        <taxon>Pseudomonadati</taxon>
        <taxon>Pseudomonadota</taxon>
        <taxon>Gammaproteobacteria</taxon>
        <taxon>Pseudomonadales</taxon>
        <taxon>Pseudomonadaceae</taxon>
        <taxon>Pseudomonas</taxon>
    </lineage>
</organism>
<sequence length="159" mass="17822">MNRVLYPGTFDPITKGHGDLVERASRLFDHVIIAVAASPKKNPLFPLEQRVELAREVTKHLPNVEVVGFSTLLAHFAKEQNANVFLRGLRAVSDFEYEFQLANMNRQLAPDVESLFLTPSERYSFISSTLVREIAALGGDITKFVHPAVADALTLRFKK</sequence>
<gene>
    <name evidence="1" type="primary">coaD</name>
    <name type="ordered locus">PFLU_5791</name>
</gene>
<name>COAD_PSEFS</name>
<proteinExistence type="inferred from homology"/>
<dbReference type="EC" id="2.7.7.3" evidence="1"/>
<dbReference type="EMBL" id="AM181176">
    <property type="protein sequence ID" value="CAY53190.1"/>
    <property type="molecule type" value="Genomic_DNA"/>
</dbReference>
<dbReference type="RefSeq" id="WP_003176711.1">
    <property type="nucleotide sequence ID" value="NC_012660.1"/>
</dbReference>
<dbReference type="SMR" id="C3K3N4"/>
<dbReference type="STRING" id="294.SRM1_05443"/>
<dbReference type="GeneID" id="97919180"/>
<dbReference type="eggNOG" id="COG0669">
    <property type="taxonomic scope" value="Bacteria"/>
</dbReference>
<dbReference type="HOGENOM" id="CLU_100149_0_1_6"/>
<dbReference type="OrthoDB" id="9806661at2"/>
<dbReference type="UniPathway" id="UPA00241">
    <property type="reaction ID" value="UER00355"/>
</dbReference>
<dbReference type="GO" id="GO:0005737">
    <property type="term" value="C:cytoplasm"/>
    <property type="evidence" value="ECO:0007669"/>
    <property type="project" value="UniProtKB-SubCell"/>
</dbReference>
<dbReference type="GO" id="GO:0005524">
    <property type="term" value="F:ATP binding"/>
    <property type="evidence" value="ECO:0007669"/>
    <property type="project" value="UniProtKB-KW"/>
</dbReference>
<dbReference type="GO" id="GO:0004595">
    <property type="term" value="F:pantetheine-phosphate adenylyltransferase activity"/>
    <property type="evidence" value="ECO:0007669"/>
    <property type="project" value="UniProtKB-UniRule"/>
</dbReference>
<dbReference type="GO" id="GO:0015937">
    <property type="term" value="P:coenzyme A biosynthetic process"/>
    <property type="evidence" value="ECO:0007669"/>
    <property type="project" value="UniProtKB-UniRule"/>
</dbReference>
<dbReference type="CDD" id="cd02163">
    <property type="entry name" value="PPAT"/>
    <property type="match status" value="1"/>
</dbReference>
<dbReference type="Gene3D" id="3.40.50.620">
    <property type="entry name" value="HUPs"/>
    <property type="match status" value="1"/>
</dbReference>
<dbReference type="HAMAP" id="MF_00151">
    <property type="entry name" value="PPAT_bact"/>
    <property type="match status" value="1"/>
</dbReference>
<dbReference type="InterPro" id="IPR004821">
    <property type="entry name" value="Cyt_trans-like"/>
</dbReference>
<dbReference type="InterPro" id="IPR001980">
    <property type="entry name" value="PPAT"/>
</dbReference>
<dbReference type="InterPro" id="IPR014729">
    <property type="entry name" value="Rossmann-like_a/b/a_fold"/>
</dbReference>
<dbReference type="NCBIfam" id="TIGR01510">
    <property type="entry name" value="coaD_prev_kdtB"/>
    <property type="match status" value="1"/>
</dbReference>
<dbReference type="NCBIfam" id="TIGR00125">
    <property type="entry name" value="cyt_tran_rel"/>
    <property type="match status" value="1"/>
</dbReference>
<dbReference type="PANTHER" id="PTHR21342">
    <property type="entry name" value="PHOSPHOPANTETHEINE ADENYLYLTRANSFERASE"/>
    <property type="match status" value="1"/>
</dbReference>
<dbReference type="PANTHER" id="PTHR21342:SF1">
    <property type="entry name" value="PHOSPHOPANTETHEINE ADENYLYLTRANSFERASE"/>
    <property type="match status" value="1"/>
</dbReference>
<dbReference type="Pfam" id="PF01467">
    <property type="entry name" value="CTP_transf_like"/>
    <property type="match status" value="1"/>
</dbReference>
<dbReference type="PRINTS" id="PR01020">
    <property type="entry name" value="LPSBIOSNTHSS"/>
</dbReference>
<dbReference type="SUPFAM" id="SSF52374">
    <property type="entry name" value="Nucleotidylyl transferase"/>
    <property type="match status" value="1"/>
</dbReference>
<protein>
    <recommendedName>
        <fullName evidence="1">Phosphopantetheine adenylyltransferase</fullName>
        <ecNumber evidence="1">2.7.7.3</ecNumber>
    </recommendedName>
    <alternativeName>
        <fullName evidence="1">Dephospho-CoA pyrophosphorylase</fullName>
    </alternativeName>
    <alternativeName>
        <fullName evidence="1">Pantetheine-phosphate adenylyltransferase</fullName>
        <shortName evidence="1">PPAT</shortName>
    </alternativeName>
</protein>
<accession>C3K3N4</accession>
<evidence type="ECO:0000255" key="1">
    <source>
        <dbReference type="HAMAP-Rule" id="MF_00151"/>
    </source>
</evidence>